<dbReference type="EC" id="2.3.1.234" evidence="1"/>
<dbReference type="EMBL" id="BA000040">
    <property type="protein sequence ID" value="BAC45832.1"/>
    <property type="molecule type" value="Genomic_DNA"/>
</dbReference>
<dbReference type="RefSeq" id="NP_767207.1">
    <property type="nucleotide sequence ID" value="NC_004463.1"/>
</dbReference>
<dbReference type="RefSeq" id="WP_011083396.1">
    <property type="nucleotide sequence ID" value="NC_004463.1"/>
</dbReference>
<dbReference type="SMR" id="Q89WW1"/>
<dbReference type="FunCoup" id="Q89WW1">
    <property type="interactions" value="679"/>
</dbReference>
<dbReference type="STRING" id="224911.AAV28_42115"/>
<dbReference type="EnsemblBacteria" id="BAC45832">
    <property type="protein sequence ID" value="BAC45832"/>
    <property type="gene ID" value="BAC45832"/>
</dbReference>
<dbReference type="GeneID" id="46495713"/>
<dbReference type="KEGG" id="bja:blr0567"/>
<dbReference type="PATRIC" id="fig|224911.44.peg.9109"/>
<dbReference type="eggNOG" id="COG0533">
    <property type="taxonomic scope" value="Bacteria"/>
</dbReference>
<dbReference type="HOGENOM" id="CLU_023208_0_2_5"/>
<dbReference type="InParanoid" id="Q89WW1"/>
<dbReference type="OrthoDB" id="9806197at2"/>
<dbReference type="PhylomeDB" id="Q89WW1"/>
<dbReference type="Proteomes" id="UP000002526">
    <property type="component" value="Chromosome"/>
</dbReference>
<dbReference type="GO" id="GO:0005737">
    <property type="term" value="C:cytoplasm"/>
    <property type="evidence" value="ECO:0007669"/>
    <property type="project" value="UniProtKB-SubCell"/>
</dbReference>
<dbReference type="GO" id="GO:0005506">
    <property type="term" value="F:iron ion binding"/>
    <property type="evidence" value="ECO:0007669"/>
    <property type="project" value="UniProtKB-UniRule"/>
</dbReference>
<dbReference type="GO" id="GO:0061711">
    <property type="term" value="F:N(6)-L-threonylcarbamoyladenine synthase activity"/>
    <property type="evidence" value="ECO:0007669"/>
    <property type="project" value="UniProtKB-EC"/>
</dbReference>
<dbReference type="GO" id="GO:0002949">
    <property type="term" value="P:tRNA threonylcarbamoyladenosine modification"/>
    <property type="evidence" value="ECO:0007669"/>
    <property type="project" value="UniProtKB-UniRule"/>
</dbReference>
<dbReference type="FunFam" id="3.30.420.40:FF:000012">
    <property type="entry name" value="tRNA N6-adenosine threonylcarbamoyltransferase"/>
    <property type="match status" value="1"/>
</dbReference>
<dbReference type="Gene3D" id="3.30.420.40">
    <property type="match status" value="2"/>
</dbReference>
<dbReference type="HAMAP" id="MF_01445">
    <property type="entry name" value="TsaD"/>
    <property type="match status" value="1"/>
</dbReference>
<dbReference type="InterPro" id="IPR043129">
    <property type="entry name" value="ATPase_NBD"/>
</dbReference>
<dbReference type="InterPro" id="IPR000905">
    <property type="entry name" value="Gcp-like_dom"/>
</dbReference>
<dbReference type="InterPro" id="IPR017861">
    <property type="entry name" value="KAE1/TsaD"/>
</dbReference>
<dbReference type="InterPro" id="IPR017860">
    <property type="entry name" value="Peptidase_M22_CS"/>
</dbReference>
<dbReference type="InterPro" id="IPR022450">
    <property type="entry name" value="TsaD"/>
</dbReference>
<dbReference type="NCBIfam" id="TIGR00329">
    <property type="entry name" value="gcp_kae1"/>
    <property type="match status" value="1"/>
</dbReference>
<dbReference type="NCBIfam" id="TIGR03723">
    <property type="entry name" value="T6A_TsaD_YgjD"/>
    <property type="match status" value="1"/>
</dbReference>
<dbReference type="PANTHER" id="PTHR11735">
    <property type="entry name" value="TRNA N6-ADENOSINE THREONYLCARBAMOYLTRANSFERASE"/>
    <property type="match status" value="1"/>
</dbReference>
<dbReference type="PANTHER" id="PTHR11735:SF6">
    <property type="entry name" value="TRNA N6-ADENOSINE THREONYLCARBAMOYLTRANSFERASE, MITOCHONDRIAL"/>
    <property type="match status" value="1"/>
</dbReference>
<dbReference type="Pfam" id="PF00814">
    <property type="entry name" value="TsaD"/>
    <property type="match status" value="1"/>
</dbReference>
<dbReference type="PRINTS" id="PR00789">
    <property type="entry name" value="OSIALOPTASE"/>
</dbReference>
<dbReference type="SUPFAM" id="SSF53067">
    <property type="entry name" value="Actin-like ATPase domain"/>
    <property type="match status" value="1"/>
</dbReference>
<dbReference type="PROSITE" id="PS01016">
    <property type="entry name" value="GLYCOPROTEASE"/>
    <property type="match status" value="1"/>
</dbReference>
<reference key="1">
    <citation type="journal article" date="2002" name="DNA Res.">
        <title>Complete genomic sequence of nitrogen-fixing symbiotic bacterium Bradyrhizobium japonicum USDA110.</title>
        <authorList>
            <person name="Kaneko T."/>
            <person name="Nakamura Y."/>
            <person name="Sato S."/>
            <person name="Minamisawa K."/>
            <person name="Uchiumi T."/>
            <person name="Sasamoto S."/>
            <person name="Watanabe A."/>
            <person name="Idesawa K."/>
            <person name="Iriguchi M."/>
            <person name="Kawashima K."/>
            <person name="Kohara M."/>
            <person name="Matsumoto M."/>
            <person name="Shimpo S."/>
            <person name="Tsuruoka H."/>
            <person name="Wada T."/>
            <person name="Yamada M."/>
            <person name="Tabata S."/>
        </authorList>
    </citation>
    <scope>NUCLEOTIDE SEQUENCE [LARGE SCALE GENOMIC DNA]</scope>
    <source>
        <strain>JCM 10833 / BCRC 13528 / IAM 13628 / NBRC 14792 / USDA 110</strain>
    </source>
</reference>
<feature type="chain" id="PRO_0000303290" description="tRNA N6-adenosine threonylcarbamoyltransferase">
    <location>
        <begin position="1"/>
        <end position="357"/>
    </location>
</feature>
<feature type="binding site" evidence="1">
    <location>
        <position position="115"/>
    </location>
    <ligand>
        <name>Fe cation</name>
        <dbReference type="ChEBI" id="CHEBI:24875"/>
    </ligand>
</feature>
<feature type="binding site" evidence="1">
    <location>
        <position position="119"/>
    </location>
    <ligand>
        <name>Fe cation</name>
        <dbReference type="ChEBI" id="CHEBI:24875"/>
    </ligand>
</feature>
<feature type="binding site" evidence="1">
    <location>
        <begin position="137"/>
        <end position="141"/>
    </location>
    <ligand>
        <name>substrate</name>
    </ligand>
</feature>
<feature type="binding site" evidence="1">
    <location>
        <position position="170"/>
    </location>
    <ligand>
        <name>substrate</name>
    </ligand>
</feature>
<feature type="binding site" evidence="1">
    <location>
        <position position="183"/>
    </location>
    <ligand>
        <name>substrate</name>
    </ligand>
</feature>
<feature type="binding site" evidence="1">
    <location>
        <position position="281"/>
    </location>
    <ligand>
        <name>substrate</name>
    </ligand>
</feature>
<feature type="binding site" evidence="1">
    <location>
        <position position="309"/>
    </location>
    <ligand>
        <name>Fe cation</name>
        <dbReference type="ChEBI" id="CHEBI:24875"/>
    </ligand>
</feature>
<comment type="function">
    <text evidence="1">Required for the formation of a threonylcarbamoyl group on adenosine at position 37 (t(6)A37) in tRNAs that read codons beginning with adenine. Is involved in the transfer of the threonylcarbamoyl moiety of threonylcarbamoyl-AMP (TC-AMP) to the N6 group of A37, together with TsaE and TsaB. TsaD likely plays a direct catalytic role in this reaction.</text>
</comment>
<comment type="catalytic activity">
    <reaction evidence="1">
        <text>L-threonylcarbamoyladenylate + adenosine(37) in tRNA = N(6)-L-threonylcarbamoyladenosine(37) in tRNA + AMP + H(+)</text>
        <dbReference type="Rhea" id="RHEA:37059"/>
        <dbReference type="Rhea" id="RHEA-COMP:10162"/>
        <dbReference type="Rhea" id="RHEA-COMP:10163"/>
        <dbReference type="ChEBI" id="CHEBI:15378"/>
        <dbReference type="ChEBI" id="CHEBI:73682"/>
        <dbReference type="ChEBI" id="CHEBI:74411"/>
        <dbReference type="ChEBI" id="CHEBI:74418"/>
        <dbReference type="ChEBI" id="CHEBI:456215"/>
        <dbReference type="EC" id="2.3.1.234"/>
    </reaction>
</comment>
<comment type="cofactor">
    <cofactor evidence="1">
        <name>Fe(2+)</name>
        <dbReference type="ChEBI" id="CHEBI:29033"/>
    </cofactor>
    <text evidence="1">Binds 1 Fe(2+) ion per subunit.</text>
</comment>
<comment type="subcellular location">
    <subcellularLocation>
        <location evidence="1">Cytoplasm</location>
    </subcellularLocation>
</comment>
<comment type="similarity">
    <text evidence="1">Belongs to the KAE1 / TsaD family.</text>
</comment>
<accession>Q89WW1</accession>
<proteinExistence type="inferred from homology"/>
<organism>
    <name type="scientific">Bradyrhizobium diazoefficiens (strain JCM 10833 / BCRC 13528 / IAM 13628 / NBRC 14792 / USDA 110)</name>
    <dbReference type="NCBI Taxonomy" id="224911"/>
    <lineage>
        <taxon>Bacteria</taxon>
        <taxon>Pseudomonadati</taxon>
        <taxon>Pseudomonadota</taxon>
        <taxon>Alphaproteobacteria</taxon>
        <taxon>Hyphomicrobiales</taxon>
        <taxon>Nitrobacteraceae</taxon>
        <taxon>Bradyrhizobium</taxon>
    </lineage>
</organism>
<evidence type="ECO:0000255" key="1">
    <source>
        <dbReference type="HAMAP-Rule" id="MF_01445"/>
    </source>
</evidence>
<sequence>MLVLGIETTCDETAAAVIERAPDGIGKILSNIVRSQVDEHAPFGGVVPEIAARAHVDLLDGIIDRAMREAGIGFAQLNGVAAAAGPGLIGGVIVGLTTAKAIALVHDTPLVAVNHLEAHALTPRLTDGIEFPYCLFLASGGHTQIVAVTGVGQYVRLGTTVDDAIGEAFDKVAKMLGLPYPGGPQVERAAAGGDAARFAFPRPMQGRPDANFSLSGLKTAVRNEASRIAEITPQDISDLCASFQAAVLEATADRLNVGLRLFREQFGAPRALVAAGGVAANQAIRGALHDVARQAKTQLIMPPPALCTDNGAMIAWAGAERLALGMTDTMEAQPRARWLLDANATAPAGYGKTRAGF</sequence>
<name>TSAD_BRADU</name>
<gene>
    <name evidence="1" type="primary">tsaD</name>
    <name type="synonym">gcp</name>
    <name type="ordered locus">blr0567</name>
</gene>
<protein>
    <recommendedName>
        <fullName evidence="1">tRNA N6-adenosine threonylcarbamoyltransferase</fullName>
        <ecNumber evidence="1">2.3.1.234</ecNumber>
    </recommendedName>
    <alternativeName>
        <fullName evidence="1">N6-L-threonylcarbamoyladenine synthase</fullName>
        <shortName evidence="1">t(6)A synthase</shortName>
    </alternativeName>
    <alternativeName>
        <fullName evidence="1">t(6)A37 threonylcarbamoyladenosine biosynthesis protein TsaD</fullName>
    </alternativeName>
    <alternativeName>
        <fullName evidence="1">tRNA threonylcarbamoyladenosine biosynthesis protein TsaD</fullName>
    </alternativeName>
</protein>
<keyword id="KW-0012">Acyltransferase</keyword>
<keyword id="KW-0963">Cytoplasm</keyword>
<keyword id="KW-0408">Iron</keyword>
<keyword id="KW-0479">Metal-binding</keyword>
<keyword id="KW-1185">Reference proteome</keyword>
<keyword id="KW-0808">Transferase</keyword>
<keyword id="KW-0819">tRNA processing</keyword>